<gene>
    <name evidence="1" type="primary">rbfA</name>
    <name type="ordered locus">Hhal_1748</name>
</gene>
<proteinExistence type="inferred from homology"/>
<organism>
    <name type="scientific">Halorhodospira halophila (strain DSM 244 / SL1)</name>
    <name type="common">Ectothiorhodospira halophila (strain DSM 244 / SL1)</name>
    <dbReference type="NCBI Taxonomy" id="349124"/>
    <lineage>
        <taxon>Bacteria</taxon>
        <taxon>Pseudomonadati</taxon>
        <taxon>Pseudomonadota</taxon>
        <taxon>Gammaproteobacteria</taxon>
        <taxon>Chromatiales</taxon>
        <taxon>Ectothiorhodospiraceae</taxon>
        <taxon>Halorhodospira</taxon>
    </lineage>
</organism>
<feature type="chain" id="PRO_1000000119" description="Ribosome-binding factor A">
    <location>
        <begin position="1"/>
        <end position="126"/>
    </location>
</feature>
<evidence type="ECO:0000255" key="1">
    <source>
        <dbReference type="HAMAP-Rule" id="MF_00003"/>
    </source>
</evidence>
<name>RBFA_HALHL</name>
<sequence length="126" mass="13971">MAKDYPRSRRIAEQLRRELAEVIRDDVDDPRVGSVTISEVQVSRDLAHATVYVTVLGAEAAEAQAGIDILNKAHGFLRSQVARRIRAKRTPSLRFLHDTAFDRGARLSALIDEVAPPPADDEPSKE</sequence>
<comment type="function">
    <text evidence="1">One of several proteins that assist in the late maturation steps of the functional core of the 30S ribosomal subunit. Associates with free 30S ribosomal subunits (but not with 30S subunits that are part of 70S ribosomes or polysomes). Required for efficient processing of 16S rRNA. May interact with the 5'-terminal helix region of 16S rRNA.</text>
</comment>
<comment type="subunit">
    <text evidence="1">Monomer. Binds 30S ribosomal subunits, but not 50S ribosomal subunits or 70S ribosomes.</text>
</comment>
<comment type="subcellular location">
    <subcellularLocation>
        <location evidence="1">Cytoplasm</location>
    </subcellularLocation>
</comment>
<comment type="similarity">
    <text evidence="1">Belongs to the RbfA family.</text>
</comment>
<protein>
    <recommendedName>
        <fullName evidence="1">Ribosome-binding factor A</fullName>
    </recommendedName>
</protein>
<keyword id="KW-0963">Cytoplasm</keyword>
<keyword id="KW-1185">Reference proteome</keyword>
<keyword id="KW-0690">Ribosome biogenesis</keyword>
<reference key="1">
    <citation type="submission" date="2006-12" db="EMBL/GenBank/DDBJ databases">
        <title>Complete sequence of Halorhodospira halophila SL1.</title>
        <authorList>
            <consortium name="US DOE Joint Genome Institute"/>
            <person name="Copeland A."/>
            <person name="Lucas S."/>
            <person name="Lapidus A."/>
            <person name="Barry K."/>
            <person name="Detter J.C."/>
            <person name="Glavina del Rio T."/>
            <person name="Hammon N."/>
            <person name="Israni S."/>
            <person name="Dalin E."/>
            <person name="Tice H."/>
            <person name="Pitluck S."/>
            <person name="Saunders E."/>
            <person name="Brettin T."/>
            <person name="Bruce D."/>
            <person name="Han C."/>
            <person name="Tapia R."/>
            <person name="Schmutz J."/>
            <person name="Larimer F."/>
            <person name="Land M."/>
            <person name="Hauser L."/>
            <person name="Kyrpides N."/>
            <person name="Mikhailova N."/>
            <person name="Hoff W."/>
            <person name="Richardson P."/>
        </authorList>
    </citation>
    <scope>NUCLEOTIDE SEQUENCE [LARGE SCALE GENOMIC DNA]</scope>
    <source>
        <strain>DSM 244 / SL1</strain>
    </source>
</reference>
<accession>A1WXV0</accession>
<dbReference type="EMBL" id="CP000544">
    <property type="protein sequence ID" value="ABM62512.1"/>
    <property type="molecule type" value="Genomic_DNA"/>
</dbReference>
<dbReference type="RefSeq" id="WP_011814534.1">
    <property type="nucleotide sequence ID" value="NC_008789.1"/>
</dbReference>
<dbReference type="SMR" id="A1WXV0"/>
<dbReference type="STRING" id="349124.Hhal_1748"/>
<dbReference type="KEGG" id="hha:Hhal_1748"/>
<dbReference type="eggNOG" id="COG0858">
    <property type="taxonomic scope" value="Bacteria"/>
</dbReference>
<dbReference type="HOGENOM" id="CLU_089475_5_0_6"/>
<dbReference type="OrthoDB" id="307788at2"/>
<dbReference type="Proteomes" id="UP000000647">
    <property type="component" value="Chromosome"/>
</dbReference>
<dbReference type="GO" id="GO:0005829">
    <property type="term" value="C:cytosol"/>
    <property type="evidence" value="ECO:0007669"/>
    <property type="project" value="TreeGrafter"/>
</dbReference>
<dbReference type="GO" id="GO:0043024">
    <property type="term" value="F:ribosomal small subunit binding"/>
    <property type="evidence" value="ECO:0007669"/>
    <property type="project" value="TreeGrafter"/>
</dbReference>
<dbReference type="GO" id="GO:0030490">
    <property type="term" value="P:maturation of SSU-rRNA"/>
    <property type="evidence" value="ECO:0007669"/>
    <property type="project" value="UniProtKB-UniRule"/>
</dbReference>
<dbReference type="Gene3D" id="3.30.300.20">
    <property type="match status" value="1"/>
</dbReference>
<dbReference type="HAMAP" id="MF_00003">
    <property type="entry name" value="RbfA"/>
    <property type="match status" value="1"/>
</dbReference>
<dbReference type="InterPro" id="IPR015946">
    <property type="entry name" value="KH_dom-like_a/b"/>
</dbReference>
<dbReference type="InterPro" id="IPR000238">
    <property type="entry name" value="RbfA"/>
</dbReference>
<dbReference type="InterPro" id="IPR023799">
    <property type="entry name" value="RbfA_dom_sf"/>
</dbReference>
<dbReference type="NCBIfam" id="TIGR00082">
    <property type="entry name" value="rbfA"/>
    <property type="match status" value="1"/>
</dbReference>
<dbReference type="PANTHER" id="PTHR33515">
    <property type="entry name" value="RIBOSOME-BINDING FACTOR A, CHLOROPLASTIC-RELATED"/>
    <property type="match status" value="1"/>
</dbReference>
<dbReference type="PANTHER" id="PTHR33515:SF1">
    <property type="entry name" value="RIBOSOME-BINDING FACTOR A, CHLOROPLASTIC-RELATED"/>
    <property type="match status" value="1"/>
</dbReference>
<dbReference type="Pfam" id="PF02033">
    <property type="entry name" value="RBFA"/>
    <property type="match status" value="1"/>
</dbReference>
<dbReference type="SUPFAM" id="SSF89919">
    <property type="entry name" value="Ribosome-binding factor A, RbfA"/>
    <property type="match status" value="1"/>
</dbReference>